<protein>
    <recommendedName>
        <fullName evidence="1">Argininosuccinate synthase</fullName>
        <ecNumber evidence="1">6.3.4.5</ecNumber>
    </recommendedName>
    <alternativeName>
        <fullName evidence="1">Citrulline--aspartate ligase</fullName>
    </alternativeName>
</protein>
<proteinExistence type="inferred from homology"/>
<accession>Q1H0L1</accession>
<keyword id="KW-0028">Amino-acid biosynthesis</keyword>
<keyword id="KW-0055">Arginine biosynthesis</keyword>
<keyword id="KW-0067">ATP-binding</keyword>
<keyword id="KW-0963">Cytoplasm</keyword>
<keyword id="KW-0436">Ligase</keyword>
<keyword id="KW-0547">Nucleotide-binding</keyword>
<keyword id="KW-1185">Reference proteome</keyword>
<comment type="catalytic activity">
    <reaction evidence="1">
        <text>L-citrulline + L-aspartate + ATP = 2-(N(omega)-L-arginino)succinate + AMP + diphosphate + H(+)</text>
        <dbReference type="Rhea" id="RHEA:10932"/>
        <dbReference type="ChEBI" id="CHEBI:15378"/>
        <dbReference type="ChEBI" id="CHEBI:29991"/>
        <dbReference type="ChEBI" id="CHEBI:30616"/>
        <dbReference type="ChEBI" id="CHEBI:33019"/>
        <dbReference type="ChEBI" id="CHEBI:57472"/>
        <dbReference type="ChEBI" id="CHEBI:57743"/>
        <dbReference type="ChEBI" id="CHEBI:456215"/>
        <dbReference type="EC" id="6.3.4.5"/>
    </reaction>
</comment>
<comment type="pathway">
    <text evidence="1">Amino-acid biosynthesis; L-arginine biosynthesis; L-arginine from L-ornithine and carbamoyl phosphate: step 2/3.</text>
</comment>
<comment type="subunit">
    <text evidence="1">Homotetramer.</text>
</comment>
<comment type="subcellular location">
    <subcellularLocation>
        <location evidence="1">Cytoplasm</location>
    </subcellularLocation>
</comment>
<comment type="similarity">
    <text evidence="1">Belongs to the argininosuccinate synthase family. Type 1 subfamily.</text>
</comment>
<feature type="chain" id="PRO_0000263939" description="Argininosuccinate synthase">
    <location>
        <begin position="1"/>
        <end position="406"/>
    </location>
</feature>
<feature type="binding site" evidence="1">
    <location>
        <begin position="10"/>
        <end position="18"/>
    </location>
    <ligand>
        <name>ATP</name>
        <dbReference type="ChEBI" id="CHEBI:30616"/>
    </ligand>
</feature>
<feature type="binding site" evidence="1">
    <location>
        <position position="37"/>
    </location>
    <ligand>
        <name>ATP</name>
        <dbReference type="ChEBI" id="CHEBI:30616"/>
    </ligand>
</feature>
<feature type="binding site" evidence="1">
    <location>
        <position position="88"/>
    </location>
    <ligand>
        <name>L-citrulline</name>
        <dbReference type="ChEBI" id="CHEBI:57743"/>
    </ligand>
</feature>
<feature type="binding site" evidence="1">
    <location>
        <position position="93"/>
    </location>
    <ligand>
        <name>L-citrulline</name>
        <dbReference type="ChEBI" id="CHEBI:57743"/>
    </ligand>
</feature>
<feature type="binding site" evidence="1">
    <location>
        <position position="118"/>
    </location>
    <ligand>
        <name>ATP</name>
        <dbReference type="ChEBI" id="CHEBI:30616"/>
    </ligand>
</feature>
<feature type="binding site" evidence="1">
    <location>
        <position position="120"/>
    </location>
    <ligand>
        <name>L-aspartate</name>
        <dbReference type="ChEBI" id="CHEBI:29991"/>
    </ligand>
</feature>
<feature type="binding site" evidence="1">
    <location>
        <position position="124"/>
    </location>
    <ligand>
        <name>L-aspartate</name>
        <dbReference type="ChEBI" id="CHEBI:29991"/>
    </ligand>
</feature>
<feature type="binding site" evidence="1">
    <location>
        <position position="124"/>
    </location>
    <ligand>
        <name>L-citrulline</name>
        <dbReference type="ChEBI" id="CHEBI:57743"/>
    </ligand>
</feature>
<feature type="binding site" evidence="1">
    <location>
        <position position="125"/>
    </location>
    <ligand>
        <name>L-aspartate</name>
        <dbReference type="ChEBI" id="CHEBI:29991"/>
    </ligand>
</feature>
<feature type="binding site" evidence="1">
    <location>
        <position position="128"/>
    </location>
    <ligand>
        <name>L-citrulline</name>
        <dbReference type="ChEBI" id="CHEBI:57743"/>
    </ligand>
</feature>
<feature type="binding site" evidence="1">
    <location>
        <position position="180"/>
    </location>
    <ligand>
        <name>L-citrulline</name>
        <dbReference type="ChEBI" id="CHEBI:57743"/>
    </ligand>
</feature>
<feature type="binding site" evidence="1">
    <location>
        <position position="189"/>
    </location>
    <ligand>
        <name>L-citrulline</name>
        <dbReference type="ChEBI" id="CHEBI:57743"/>
    </ligand>
</feature>
<feature type="binding site" evidence="1">
    <location>
        <position position="265"/>
    </location>
    <ligand>
        <name>L-citrulline</name>
        <dbReference type="ChEBI" id="CHEBI:57743"/>
    </ligand>
</feature>
<feature type="binding site" evidence="1">
    <location>
        <position position="277"/>
    </location>
    <ligand>
        <name>L-citrulline</name>
        <dbReference type="ChEBI" id="CHEBI:57743"/>
    </ligand>
</feature>
<reference key="1">
    <citation type="submission" date="2006-03" db="EMBL/GenBank/DDBJ databases">
        <title>Complete sequence of Methylobacillus flagellatus KT.</title>
        <authorList>
            <consortium name="US DOE Joint Genome Institute"/>
            <person name="Copeland A."/>
            <person name="Lucas S."/>
            <person name="Lapidus A."/>
            <person name="Barry K."/>
            <person name="Detter J.C."/>
            <person name="Glavina del Rio T."/>
            <person name="Hammon N."/>
            <person name="Israni S."/>
            <person name="Dalin E."/>
            <person name="Tice H."/>
            <person name="Pitluck S."/>
            <person name="Brettin T."/>
            <person name="Bruce D."/>
            <person name="Han C."/>
            <person name="Tapia R."/>
            <person name="Saunders E."/>
            <person name="Gilna P."/>
            <person name="Schmutz J."/>
            <person name="Larimer F."/>
            <person name="Land M."/>
            <person name="Kyrpides N."/>
            <person name="Anderson I."/>
            <person name="Richardson P."/>
        </authorList>
    </citation>
    <scope>NUCLEOTIDE SEQUENCE [LARGE SCALE GENOMIC DNA]</scope>
    <source>
        <strain>ATCC 51484 / DSM 6875 / VKM B-1610 / KT</strain>
    </source>
</reference>
<sequence length="406" mass="45907">MSDVNKVVLAYSGGLDTSVILKWLQDTYQCEVVTFTADIGQGEELEPAREKARQFGVKEIYIDDLREEFVRDFVFPMFRANTVYEGEYLLGTSIARPLIAKRLIEIAQETNADAVSHGATGKGNDQVRFELGAYALNPNIKIIAPWREWDLLSREKLLAYAEKHGIPVEMKHRQGGSPYSMDANLLHISYEGRHLENPAAEAEEDMWRWTVSPERAPDEAEYLEIEYRNGDPISLNGKTLKPHELLAELNRLGGKHGIGRLDLVENRYVGMKSRGCYETPGGTILLKAHRAIESITLDREVAHLKDDLMPRYASMIYNGYWWSPERLALQALIDHTQQTVNGWVKLKLYKGNVIVTGRDSGTDSLFDPNIATFEDDAGAYDHRDAGGFIKLNALRLRIAANLRNKK</sequence>
<evidence type="ECO:0000255" key="1">
    <source>
        <dbReference type="HAMAP-Rule" id="MF_00005"/>
    </source>
</evidence>
<dbReference type="EC" id="6.3.4.5" evidence="1"/>
<dbReference type="EMBL" id="CP000284">
    <property type="protein sequence ID" value="ABE49976.1"/>
    <property type="molecule type" value="Genomic_DNA"/>
</dbReference>
<dbReference type="RefSeq" id="WP_011479930.1">
    <property type="nucleotide sequence ID" value="NC_007947.1"/>
</dbReference>
<dbReference type="SMR" id="Q1H0L1"/>
<dbReference type="STRING" id="265072.Mfla_1708"/>
<dbReference type="KEGG" id="mfa:Mfla_1708"/>
<dbReference type="eggNOG" id="COG0137">
    <property type="taxonomic scope" value="Bacteria"/>
</dbReference>
<dbReference type="HOGENOM" id="CLU_032784_4_2_4"/>
<dbReference type="OrthoDB" id="9801641at2"/>
<dbReference type="UniPathway" id="UPA00068">
    <property type="reaction ID" value="UER00113"/>
</dbReference>
<dbReference type="Proteomes" id="UP000002440">
    <property type="component" value="Chromosome"/>
</dbReference>
<dbReference type="GO" id="GO:0005737">
    <property type="term" value="C:cytoplasm"/>
    <property type="evidence" value="ECO:0007669"/>
    <property type="project" value="UniProtKB-SubCell"/>
</dbReference>
<dbReference type="GO" id="GO:0004055">
    <property type="term" value="F:argininosuccinate synthase activity"/>
    <property type="evidence" value="ECO:0007669"/>
    <property type="project" value="UniProtKB-UniRule"/>
</dbReference>
<dbReference type="GO" id="GO:0005524">
    <property type="term" value="F:ATP binding"/>
    <property type="evidence" value="ECO:0007669"/>
    <property type="project" value="UniProtKB-UniRule"/>
</dbReference>
<dbReference type="GO" id="GO:0000053">
    <property type="term" value="P:argininosuccinate metabolic process"/>
    <property type="evidence" value="ECO:0007669"/>
    <property type="project" value="TreeGrafter"/>
</dbReference>
<dbReference type="GO" id="GO:0006526">
    <property type="term" value="P:L-arginine biosynthetic process"/>
    <property type="evidence" value="ECO:0007669"/>
    <property type="project" value="UniProtKB-UniRule"/>
</dbReference>
<dbReference type="GO" id="GO:0000050">
    <property type="term" value="P:urea cycle"/>
    <property type="evidence" value="ECO:0007669"/>
    <property type="project" value="TreeGrafter"/>
</dbReference>
<dbReference type="CDD" id="cd01999">
    <property type="entry name" value="ASS"/>
    <property type="match status" value="1"/>
</dbReference>
<dbReference type="FunFam" id="3.40.50.620:FF:000019">
    <property type="entry name" value="Argininosuccinate synthase"/>
    <property type="match status" value="1"/>
</dbReference>
<dbReference type="FunFam" id="3.90.1260.10:FF:000007">
    <property type="entry name" value="Argininosuccinate synthase"/>
    <property type="match status" value="1"/>
</dbReference>
<dbReference type="Gene3D" id="3.90.1260.10">
    <property type="entry name" value="Argininosuccinate synthetase, chain A, domain 2"/>
    <property type="match status" value="1"/>
</dbReference>
<dbReference type="Gene3D" id="3.40.50.620">
    <property type="entry name" value="HUPs"/>
    <property type="match status" value="1"/>
</dbReference>
<dbReference type="Gene3D" id="1.20.5.470">
    <property type="entry name" value="Single helix bin"/>
    <property type="match status" value="1"/>
</dbReference>
<dbReference type="HAMAP" id="MF_00005">
    <property type="entry name" value="Arg_succ_synth_type1"/>
    <property type="match status" value="1"/>
</dbReference>
<dbReference type="InterPro" id="IPR048268">
    <property type="entry name" value="Arginosuc_syn_C"/>
</dbReference>
<dbReference type="InterPro" id="IPR048267">
    <property type="entry name" value="Arginosuc_syn_N"/>
</dbReference>
<dbReference type="InterPro" id="IPR001518">
    <property type="entry name" value="Arginosuc_synth"/>
</dbReference>
<dbReference type="InterPro" id="IPR018223">
    <property type="entry name" value="Arginosuc_synth_CS"/>
</dbReference>
<dbReference type="InterPro" id="IPR023434">
    <property type="entry name" value="Arginosuc_synth_type_1_subfam"/>
</dbReference>
<dbReference type="InterPro" id="IPR024074">
    <property type="entry name" value="AS_cat/multimer_dom_body"/>
</dbReference>
<dbReference type="InterPro" id="IPR014729">
    <property type="entry name" value="Rossmann-like_a/b/a_fold"/>
</dbReference>
<dbReference type="NCBIfam" id="TIGR00032">
    <property type="entry name" value="argG"/>
    <property type="match status" value="1"/>
</dbReference>
<dbReference type="NCBIfam" id="NF001770">
    <property type="entry name" value="PRK00509.1"/>
    <property type="match status" value="1"/>
</dbReference>
<dbReference type="PANTHER" id="PTHR11587">
    <property type="entry name" value="ARGININOSUCCINATE SYNTHASE"/>
    <property type="match status" value="1"/>
</dbReference>
<dbReference type="PANTHER" id="PTHR11587:SF2">
    <property type="entry name" value="ARGININOSUCCINATE SYNTHASE"/>
    <property type="match status" value="1"/>
</dbReference>
<dbReference type="Pfam" id="PF20979">
    <property type="entry name" value="Arginosuc_syn_C"/>
    <property type="match status" value="1"/>
</dbReference>
<dbReference type="Pfam" id="PF00764">
    <property type="entry name" value="Arginosuc_synth"/>
    <property type="match status" value="1"/>
</dbReference>
<dbReference type="SUPFAM" id="SSF52402">
    <property type="entry name" value="Adenine nucleotide alpha hydrolases-like"/>
    <property type="match status" value="1"/>
</dbReference>
<dbReference type="SUPFAM" id="SSF69864">
    <property type="entry name" value="Argininosuccinate synthetase, C-terminal domain"/>
    <property type="match status" value="1"/>
</dbReference>
<dbReference type="PROSITE" id="PS00564">
    <property type="entry name" value="ARGININOSUCCIN_SYN_1"/>
    <property type="match status" value="1"/>
</dbReference>
<dbReference type="PROSITE" id="PS00565">
    <property type="entry name" value="ARGININOSUCCIN_SYN_2"/>
    <property type="match status" value="1"/>
</dbReference>
<name>ASSY_METFK</name>
<gene>
    <name evidence="1" type="primary">argG</name>
    <name type="ordered locus">Mfla_1708</name>
</gene>
<organism>
    <name type="scientific">Methylobacillus flagellatus (strain ATCC 51484 / DSM 6875 / VKM B-1610 / KT)</name>
    <dbReference type="NCBI Taxonomy" id="265072"/>
    <lineage>
        <taxon>Bacteria</taxon>
        <taxon>Pseudomonadati</taxon>
        <taxon>Pseudomonadota</taxon>
        <taxon>Betaproteobacteria</taxon>
        <taxon>Nitrosomonadales</taxon>
        <taxon>Methylophilaceae</taxon>
        <taxon>Methylobacillus</taxon>
    </lineage>
</organism>